<protein>
    <recommendedName>
        <fullName>Cytochrome P450 2A9</fullName>
        <ecNumber>1.14.14.1</ecNumber>
    </recommendedName>
    <alternativeName>
        <fullName>CYPIIA9</fullName>
    </alternativeName>
    <alternativeName>
        <fullName>Cytochrome P450-MC1-R</fullName>
    </alternativeName>
    <alternativeName>
        <fullName>Testosterone 7-alpha-hydroxylase</fullName>
    </alternativeName>
</protein>
<gene>
    <name type="primary">CYP2A9</name>
</gene>
<reference key="1">
    <citation type="journal article" date="1998" name="Arch. Biochem. Biophys.">
        <title>Cloning and characterization of Syrian hamster testosterone 7 alpha-hydroxylase, CYP2A9.</title>
        <authorList>
            <person name="Kurose K."/>
            <person name="Tohkin M."/>
            <person name="Ushio F."/>
            <person name="Fukuhara M."/>
        </authorList>
    </citation>
    <scope>NUCLEOTIDE SEQUENCE [MRNA]</scope>
    <source>
        <tissue>Liver</tissue>
    </source>
</reference>
<reference key="2">
    <citation type="journal article" date="1990" name="Arch. Biochem. Biophys.">
        <title>Cloning and characterization of two major 3-methylcholanthrene inducible hamster liver cytochrome P450s.</title>
        <authorList>
            <person name="Lai T.S."/>
            <person name="Chiang J.Y.L."/>
        </authorList>
    </citation>
    <scope>NUCLEOTIDE SEQUENCE [MRNA] OF 208-493</scope>
    <source>
        <tissue>Liver</tissue>
    </source>
</reference>
<dbReference type="EC" id="1.14.14.1"/>
<dbReference type="EMBL" id="D86953">
    <property type="protein sequence ID" value="BAA25259.1"/>
    <property type="molecule type" value="mRNA"/>
</dbReference>
<dbReference type="EMBL" id="M63789">
    <property type="protein sequence ID" value="AAA37069.1"/>
    <property type="molecule type" value="mRNA"/>
</dbReference>
<dbReference type="RefSeq" id="NP_001268294.1">
    <property type="nucleotide sequence ID" value="NM_001281365.1"/>
</dbReference>
<dbReference type="SMR" id="P24455"/>
<dbReference type="STRING" id="10036.ENSMAUP00000015892"/>
<dbReference type="GeneID" id="101826326"/>
<dbReference type="KEGG" id="ag:BAA25259"/>
<dbReference type="KEGG" id="maua:101826326"/>
<dbReference type="eggNOG" id="KOG0156">
    <property type="taxonomic scope" value="Eukaryota"/>
</dbReference>
<dbReference type="OrthoDB" id="2789670at2759"/>
<dbReference type="Proteomes" id="UP000189706">
    <property type="component" value="Unplaced"/>
</dbReference>
<dbReference type="GO" id="GO:0005789">
    <property type="term" value="C:endoplasmic reticulum membrane"/>
    <property type="evidence" value="ECO:0007669"/>
    <property type="project" value="UniProtKB-SubCell"/>
</dbReference>
<dbReference type="GO" id="GO:0008392">
    <property type="term" value="F:arachidonate epoxygenase activity"/>
    <property type="evidence" value="ECO:0007669"/>
    <property type="project" value="TreeGrafter"/>
</dbReference>
<dbReference type="GO" id="GO:0020037">
    <property type="term" value="F:heme binding"/>
    <property type="evidence" value="ECO:0007669"/>
    <property type="project" value="InterPro"/>
</dbReference>
<dbReference type="GO" id="GO:0005506">
    <property type="term" value="F:iron ion binding"/>
    <property type="evidence" value="ECO:0007669"/>
    <property type="project" value="InterPro"/>
</dbReference>
<dbReference type="GO" id="GO:0016712">
    <property type="term" value="F:oxidoreductase activity, acting on paired donors, with incorporation or reduction of molecular oxygen, reduced flavin or flavoprotein as one donor, and incorporation of one atom of oxygen"/>
    <property type="evidence" value="ECO:0007669"/>
    <property type="project" value="UniProtKB-EC"/>
</dbReference>
<dbReference type="GO" id="GO:0009804">
    <property type="term" value="P:coumarin metabolic process"/>
    <property type="evidence" value="ECO:0007669"/>
    <property type="project" value="TreeGrafter"/>
</dbReference>
<dbReference type="GO" id="GO:0019373">
    <property type="term" value="P:epoxygenase P450 pathway"/>
    <property type="evidence" value="ECO:0007669"/>
    <property type="project" value="TreeGrafter"/>
</dbReference>
<dbReference type="GO" id="GO:0006805">
    <property type="term" value="P:xenobiotic metabolic process"/>
    <property type="evidence" value="ECO:0007669"/>
    <property type="project" value="TreeGrafter"/>
</dbReference>
<dbReference type="CDD" id="cd20668">
    <property type="entry name" value="CYP2A"/>
    <property type="match status" value="1"/>
</dbReference>
<dbReference type="FunFam" id="1.10.630.10:FF:000238">
    <property type="entry name" value="Cytochrome P450 2A6"/>
    <property type="match status" value="1"/>
</dbReference>
<dbReference type="Gene3D" id="1.10.630.10">
    <property type="entry name" value="Cytochrome P450"/>
    <property type="match status" value="1"/>
</dbReference>
<dbReference type="InterPro" id="IPR001128">
    <property type="entry name" value="Cyt_P450"/>
</dbReference>
<dbReference type="InterPro" id="IPR017972">
    <property type="entry name" value="Cyt_P450_CS"/>
</dbReference>
<dbReference type="InterPro" id="IPR002401">
    <property type="entry name" value="Cyt_P450_E_grp-I"/>
</dbReference>
<dbReference type="InterPro" id="IPR008067">
    <property type="entry name" value="Cyt_P450_E_grp-I_CYP2A-like"/>
</dbReference>
<dbReference type="InterPro" id="IPR036396">
    <property type="entry name" value="Cyt_P450_sf"/>
</dbReference>
<dbReference type="InterPro" id="IPR050182">
    <property type="entry name" value="Cytochrome_P450_fam2"/>
</dbReference>
<dbReference type="PANTHER" id="PTHR24300">
    <property type="entry name" value="CYTOCHROME P450 508A4-RELATED"/>
    <property type="match status" value="1"/>
</dbReference>
<dbReference type="PANTHER" id="PTHR24300:SF103">
    <property type="entry name" value="CYTOCHROME P450-RELATED"/>
    <property type="match status" value="1"/>
</dbReference>
<dbReference type="Pfam" id="PF00067">
    <property type="entry name" value="p450"/>
    <property type="match status" value="1"/>
</dbReference>
<dbReference type="PRINTS" id="PR00463">
    <property type="entry name" value="EP450I"/>
</dbReference>
<dbReference type="PRINTS" id="PR01684">
    <property type="entry name" value="EP450ICYP2A"/>
</dbReference>
<dbReference type="PRINTS" id="PR00385">
    <property type="entry name" value="P450"/>
</dbReference>
<dbReference type="SUPFAM" id="SSF48264">
    <property type="entry name" value="Cytochrome P450"/>
    <property type="match status" value="1"/>
</dbReference>
<dbReference type="PROSITE" id="PS00086">
    <property type="entry name" value="CYTOCHROME_P450"/>
    <property type="match status" value="1"/>
</dbReference>
<feature type="chain" id="PRO_0000051672" description="Cytochrome P450 2A9">
    <location>
        <begin position="1"/>
        <end position="493"/>
    </location>
</feature>
<feature type="binding site" description="axial binding residue" evidence="1">
    <location>
        <position position="438"/>
    </location>
    <ligand>
        <name>heme</name>
        <dbReference type="ChEBI" id="CHEBI:30413"/>
    </ligand>
    <ligandPart>
        <name>Fe</name>
        <dbReference type="ChEBI" id="CHEBI:18248"/>
    </ligandPart>
</feature>
<feature type="sequence conflict" description="In Ref. 2; AAA37069." evidence="2" ref="2">
    <original>L</original>
    <variation>C</variation>
    <location>
        <position position="367"/>
    </location>
</feature>
<sequence>MLGSGLILVAILAYLSVMVLVFVWKQKFRGKLPPGPTPLPYIGNYLQLNTKDIYSSITELSERYGPVFTIYLGPRPVVVLYGYDAVKEALVDQAEEFSGRGEQATYNTLFKDYGVAFSSGERAKQLRRFSIATLRDFGVGKRGVEERIQEEAAYLIKMLRSTRGAPIDPNDYLSQTVSNVISSVVFGDAFDYEDKEFLELLHMMNEMNKFAASPVGQLYDMFHSVMKYLPGPQQQIIKNTKELEDFMIRKVKQNQSTLDLNSARNFIDSFLIHMHEEKKNPTSEFNIKNLVMTSLNLFFAGSETVSSTIRYGFLLLMKYPEVEAKVHEEIDRVIGRNRQPQFEDRMKMPYTEAVINEIQRFANLAPLGIPRKTIKNTTFRGFFLPKDTDVYPILGSLLTDPKFFTSPKHFNPQNFLDDRGQLKKIAAFVPFSVGKRFCLGDGLARMELFLFLTTILQNFRLKFPKKLEDIDASPKPLGFSRIIPRYTMSFLPI</sequence>
<evidence type="ECO:0000250" key="1"/>
<evidence type="ECO:0000305" key="2"/>
<keyword id="KW-0256">Endoplasmic reticulum</keyword>
<keyword id="KW-0349">Heme</keyword>
<keyword id="KW-0408">Iron</keyword>
<keyword id="KW-0472">Membrane</keyword>
<keyword id="KW-0479">Metal-binding</keyword>
<keyword id="KW-0492">Microsome</keyword>
<keyword id="KW-0503">Monooxygenase</keyword>
<keyword id="KW-0560">Oxidoreductase</keyword>
<keyword id="KW-1185">Reference proteome</keyword>
<organism>
    <name type="scientific">Mesocricetus auratus</name>
    <name type="common">Golden hamster</name>
    <dbReference type="NCBI Taxonomy" id="10036"/>
    <lineage>
        <taxon>Eukaryota</taxon>
        <taxon>Metazoa</taxon>
        <taxon>Chordata</taxon>
        <taxon>Craniata</taxon>
        <taxon>Vertebrata</taxon>
        <taxon>Euteleostomi</taxon>
        <taxon>Mammalia</taxon>
        <taxon>Eutheria</taxon>
        <taxon>Euarchontoglires</taxon>
        <taxon>Glires</taxon>
        <taxon>Rodentia</taxon>
        <taxon>Myomorpha</taxon>
        <taxon>Muroidea</taxon>
        <taxon>Cricetidae</taxon>
        <taxon>Cricetinae</taxon>
        <taxon>Mesocricetus</taxon>
    </lineage>
</organism>
<name>CP2A9_MESAU</name>
<comment type="function">
    <text>Cytochromes P450 are a group of heme-thiolate monooxygenases. In liver microsomes, this enzyme is involved in an NADPH-dependent electron transport pathway. It oxidizes a variety of structurally unrelated compounds, including steroids, fatty acids, and xenobiotics.</text>
</comment>
<comment type="catalytic activity">
    <reaction>
        <text>an organic molecule + reduced [NADPH--hemoprotein reductase] + O2 = an alcohol + oxidized [NADPH--hemoprotein reductase] + H2O + H(+)</text>
        <dbReference type="Rhea" id="RHEA:17149"/>
        <dbReference type="Rhea" id="RHEA-COMP:11964"/>
        <dbReference type="Rhea" id="RHEA-COMP:11965"/>
        <dbReference type="ChEBI" id="CHEBI:15377"/>
        <dbReference type="ChEBI" id="CHEBI:15378"/>
        <dbReference type="ChEBI" id="CHEBI:15379"/>
        <dbReference type="ChEBI" id="CHEBI:30879"/>
        <dbReference type="ChEBI" id="CHEBI:57618"/>
        <dbReference type="ChEBI" id="CHEBI:58210"/>
        <dbReference type="ChEBI" id="CHEBI:142491"/>
        <dbReference type="EC" id="1.14.14.1"/>
    </reaction>
</comment>
<comment type="cofactor">
    <cofactor evidence="1">
        <name>heme</name>
        <dbReference type="ChEBI" id="CHEBI:30413"/>
    </cofactor>
</comment>
<comment type="subcellular location">
    <subcellularLocation>
        <location>Endoplasmic reticulum membrane</location>
        <topology>Peripheral membrane protein</topology>
    </subcellularLocation>
    <subcellularLocation>
        <location>Microsome membrane</location>
        <topology>Peripheral membrane protein</topology>
    </subcellularLocation>
</comment>
<comment type="tissue specificity">
    <text>Liver.</text>
</comment>
<comment type="similarity">
    <text evidence="2">Belongs to the cytochrome P450 family.</text>
</comment>
<accession>P24455</accession>
<accession>O70538</accession>
<proteinExistence type="evidence at transcript level"/>